<dbReference type="EC" id="3.6.1.-" evidence="1"/>
<dbReference type="EMBL" id="CP000886">
    <property type="protein sequence ID" value="ABX70134.1"/>
    <property type="molecule type" value="Genomic_DNA"/>
</dbReference>
<dbReference type="RefSeq" id="WP_000940976.1">
    <property type="nucleotide sequence ID" value="NC_010102.1"/>
</dbReference>
<dbReference type="SMR" id="A9MXC3"/>
<dbReference type="KEGG" id="spq:SPAB_04823"/>
<dbReference type="PATRIC" id="fig|1016998.12.peg.4537"/>
<dbReference type="HOGENOM" id="CLU_018678_1_0_6"/>
<dbReference type="BioCyc" id="SENT1016998:SPAB_RS19585-MONOMER"/>
<dbReference type="Proteomes" id="UP000008556">
    <property type="component" value="Chromosome"/>
</dbReference>
<dbReference type="GO" id="GO:0005737">
    <property type="term" value="C:cytoplasm"/>
    <property type="evidence" value="ECO:0007669"/>
    <property type="project" value="UniProtKB-SubCell"/>
</dbReference>
<dbReference type="GO" id="GO:0005524">
    <property type="term" value="F:ATP binding"/>
    <property type="evidence" value="ECO:0007669"/>
    <property type="project" value="UniProtKB-KW"/>
</dbReference>
<dbReference type="GO" id="GO:0016887">
    <property type="term" value="F:ATP hydrolysis activity"/>
    <property type="evidence" value="ECO:0007669"/>
    <property type="project" value="UniProtKB-UniRule"/>
</dbReference>
<dbReference type="CDD" id="cd00009">
    <property type="entry name" value="AAA"/>
    <property type="match status" value="1"/>
</dbReference>
<dbReference type="FunFam" id="3.40.50.300:FF:000410">
    <property type="entry name" value="ATPase RavA"/>
    <property type="match status" value="1"/>
</dbReference>
<dbReference type="Gene3D" id="1.20.58.1510">
    <property type="match status" value="1"/>
</dbReference>
<dbReference type="Gene3D" id="2.40.128.430">
    <property type="match status" value="1"/>
</dbReference>
<dbReference type="Gene3D" id="3.40.50.300">
    <property type="entry name" value="P-loop containing nucleotide triphosphate hydrolases"/>
    <property type="match status" value="1"/>
</dbReference>
<dbReference type="HAMAP" id="MF_01625">
    <property type="entry name" value="ATPase_RavA"/>
    <property type="match status" value="1"/>
</dbReference>
<dbReference type="InterPro" id="IPR003593">
    <property type="entry name" value="AAA+_ATPase"/>
</dbReference>
<dbReference type="InterPro" id="IPR023671">
    <property type="entry name" value="ATPase_RavA"/>
</dbReference>
<dbReference type="InterPro" id="IPR022547">
    <property type="entry name" value="ATPase_RavA_C"/>
</dbReference>
<dbReference type="InterPro" id="IPR045427">
    <property type="entry name" value="MoxR"/>
</dbReference>
<dbReference type="InterPro" id="IPR027417">
    <property type="entry name" value="P-loop_NTPase"/>
</dbReference>
<dbReference type="InterPro" id="IPR041538">
    <property type="entry name" value="RavA-like_AAA_lid"/>
</dbReference>
<dbReference type="InterPro" id="IPR050513">
    <property type="entry name" value="RavA_ATPases"/>
</dbReference>
<dbReference type="InterPro" id="IPR046898">
    <property type="entry name" value="RavA_LARA_dom"/>
</dbReference>
<dbReference type="InterPro" id="IPR046932">
    <property type="entry name" value="RavA_LARA_sf"/>
</dbReference>
<dbReference type="NCBIfam" id="NF010054">
    <property type="entry name" value="PRK13531.1"/>
    <property type="match status" value="1"/>
</dbReference>
<dbReference type="PANTHER" id="PTHR32204">
    <property type="entry name" value="ATPASE RAVA"/>
    <property type="match status" value="1"/>
</dbReference>
<dbReference type="PANTHER" id="PTHR32204:SF0">
    <property type="entry name" value="ATPASE RAVA"/>
    <property type="match status" value="1"/>
</dbReference>
<dbReference type="Pfam" id="PF17868">
    <property type="entry name" value="AAA_lid_8"/>
    <property type="match status" value="1"/>
</dbReference>
<dbReference type="Pfam" id="PF12592">
    <property type="entry name" value="ATPase_RavA_C"/>
    <property type="match status" value="1"/>
</dbReference>
<dbReference type="Pfam" id="PF20030">
    <property type="entry name" value="bpMoxR"/>
    <property type="match status" value="1"/>
</dbReference>
<dbReference type="Pfam" id="PF20265">
    <property type="entry name" value="LARA_dom"/>
    <property type="match status" value="1"/>
</dbReference>
<dbReference type="SMART" id="SM00382">
    <property type="entry name" value="AAA"/>
    <property type="match status" value="1"/>
</dbReference>
<dbReference type="SUPFAM" id="SSF52540">
    <property type="entry name" value="P-loop containing nucleoside triphosphate hydrolases"/>
    <property type="match status" value="1"/>
</dbReference>
<accession>A9MXC3</accession>
<feature type="chain" id="PRO_1000088098" description="Regulatory ATPase RavA">
    <location>
        <begin position="1"/>
        <end position="498"/>
    </location>
</feature>
<feature type="binding site" evidence="1">
    <location>
        <position position="23"/>
    </location>
    <ligand>
        <name>ADP</name>
        <dbReference type="ChEBI" id="CHEBI:456216"/>
    </ligand>
</feature>
<feature type="binding site" evidence="1">
    <location>
        <position position="49"/>
    </location>
    <ligand>
        <name>ADP</name>
        <dbReference type="ChEBI" id="CHEBI:456216"/>
    </ligand>
</feature>
<feature type="binding site" evidence="1">
    <location>
        <position position="50"/>
    </location>
    <ligand>
        <name>ADP</name>
        <dbReference type="ChEBI" id="CHEBI:456216"/>
    </ligand>
</feature>
<feature type="binding site" evidence="1">
    <location>
        <position position="51"/>
    </location>
    <ligand>
        <name>ADP</name>
        <dbReference type="ChEBI" id="CHEBI:456216"/>
    </ligand>
</feature>
<feature type="binding site" evidence="1">
    <location>
        <position position="52"/>
    </location>
    <ligand>
        <name>ADP</name>
        <dbReference type="ChEBI" id="CHEBI:456216"/>
    </ligand>
</feature>
<feature type="binding site" evidence="1">
    <location>
        <position position="53"/>
    </location>
    <ligand>
        <name>ADP</name>
        <dbReference type="ChEBI" id="CHEBI:456216"/>
    </ligand>
</feature>
<feature type="binding site" evidence="1">
    <location>
        <position position="54"/>
    </location>
    <ligand>
        <name>ADP</name>
        <dbReference type="ChEBI" id="CHEBI:456216"/>
    </ligand>
</feature>
<feature type="binding site" evidence="1">
    <location>
        <position position="196"/>
    </location>
    <ligand>
        <name>ADP</name>
        <dbReference type="ChEBI" id="CHEBI:456216"/>
    </ligand>
</feature>
<reference key="1">
    <citation type="submission" date="2007-11" db="EMBL/GenBank/DDBJ databases">
        <authorList>
            <consortium name="The Salmonella enterica serovar Paratyphi B Genome Sequencing Project"/>
            <person name="McClelland M."/>
            <person name="Sanderson E.K."/>
            <person name="Porwollik S."/>
            <person name="Spieth J."/>
            <person name="Clifton W.S."/>
            <person name="Fulton R."/>
            <person name="Cordes M."/>
            <person name="Wollam A."/>
            <person name="Shah N."/>
            <person name="Pepin K."/>
            <person name="Bhonagiri V."/>
            <person name="Nash W."/>
            <person name="Johnson M."/>
            <person name="Thiruvilangam P."/>
            <person name="Wilson R."/>
        </authorList>
    </citation>
    <scope>NUCLEOTIDE SEQUENCE [LARGE SCALE GENOMIC DNA]</scope>
    <source>
        <strain>ATCC BAA-1250 / SPB7</strain>
    </source>
</reference>
<organism>
    <name type="scientific">Salmonella paratyphi B (strain ATCC BAA-1250 / SPB7)</name>
    <dbReference type="NCBI Taxonomy" id="1016998"/>
    <lineage>
        <taxon>Bacteria</taxon>
        <taxon>Pseudomonadati</taxon>
        <taxon>Pseudomonadota</taxon>
        <taxon>Gammaproteobacteria</taxon>
        <taxon>Enterobacterales</taxon>
        <taxon>Enterobacteriaceae</taxon>
        <taxon>Salmonella</taxon>
    </lineage>
</organism>
<comment type="function">
    <text evidence="1">Component of the RavA-ViaA chaperone complex, which may act on the membrane to optimize the function of some of the respiratory chains. RavA functions as an ATPase.</text>
</comment>
<comment type="catalytic activity">
    <reaction evidence="1">
        <text>ATP + H2O = ADP + phosphate + H(+)</text>
        <dbReference type="Rhea" id="RHEA:13065"/>
        <dbReference type="ChEBI" id="CHEBI:15377"/>
        <dbReference type="ChEBI" id="CHEBI:15378"/>
        <dbReference type="ChEBI" id="CHEBI:30616"/>
        <dbReference type="ChEBI" id="CHEBI:43474"/>
        <dbReference type="ChEBI" id="CHEBI:456216"/>
    </reaction>
</comment>
<comment type="activity regulation">
    <text evidence="1">ATPase activity is stimulated by ViaA.</text>
</comment>
<comment type="subunit">
    <text evidence="1">Homohexamer. Interacts with ViaA.</text>
</comment>
<comment type="subcellular location">
    <subcellularLocation>
        <location evidence="1">Cytoplasm</location>
    </subcellularLocation>
</comment>
<comment type="similarity">
    <text evidence="1">Belongs to the RavA family.</text>
</comment>
<name>RAVA_SALPB</name>
<gene>
    <name evidence="1" type="primary">ravA</name>
    <name type="ordered locus">SPAB_04823</name>
</gene>
<protein>
    <recommendedName>
        <fullName evidence="1">Regulatory ATPase RavA</fullName>
        <ecNumber evidence="1">3.6.1.-</ecNumber>
    </recommendedName>
    <alternativeName>
        <fullName evidence="1">Regulatory ATPase variant A</fullName>
    </alternativeName>
</protein>
<proteinExistence type="inferred from homology"/>
<keyword id="KW-0067">ATP-binding</keyword>
<keyword id="KW-0143">Chaperone</keyword>
<keyword id="KW-0963">Cytoplasm</keyword>
<keyword id="KW-0378">Hydrolase</keyword>
<keyword id="KW-0547">Nucleotide-binding</keyword>
<sequence length="498" mass="56701">MAHPHLLAERISRLSSALEKGLYERSHAIRLCLLAALSGESVFLLGPPGIAKSLIARRLKFAFQRARAFEYLMTRFSTPEEVFGPLSIQALKDEGRYERLTTGYLPEAEIVFLDEIWKAGPAILNTLLTAINERHFRNGAFEEKIPMRLLVAASNELPEADSSLEALYDRMLIRLWLDKVQDKANFRSMLISQQDESDNPVPASLQVSDEEYQQWQKDIGAISLPDPVFELIFTLRQQLDNLPNAPYVSDRRWKKAIRLLQASAFFSGRDAVAPIDLILLKDCLWYDAQSLNLMQQQLEILMTGHAWQQQAMLTRLGGIVQRRLQLQQQQSDKTAFTVIKEGGMFSRRPHYTLPPEASASTLTLLLQKPLKLHDMEVIHITFDRSALELWLTKGGEIRGKLNGIGFAQTLNMEVDNAQHLVVRDISLQGTRLALPGAAEDSMPAEIKQQLETLENDWRQQHTRFSEQQHCLFIHSEWLGRIEASLQDVGEQIRQAQQC</sequence>
<evidence type="ECO:0000255" key="1">
    <source>
        <dbReference type="HAMAP-Rule" id="MF_01625"/>
    </source>
</evidence>